<organism>
    <name type="scientific">Ophryacus sphenophrys</name>
    <name type="common">Broad-horned pitviper</name>
    <name type="synonym">Bothrops sphenophrys</name>
    <dbReference type="NCBI Taxonomy" id="2340898"/>
    <lineage>
        <taxon>Eukaryota</taxon>
        <taxon>Metazoa</taxon>
        <taxon>Chordata</taxon>
        <taxon>Craniata</taxon>
        <taxon>Vertebrata</taxon>
        <taxon>Euteleostomi</taxon>
        <taxon>Lepidosauria</taxon>
        <taxon>Squamata</taxon>
        <taxon>Bifurcata</taxon>
        <taxon>Unidentata</taxon>
        <taxon>Episquamata</taxon>
        <taxon>Toxicofera</taxon>
        <taxon>Serpentes</taxon>
        <taxon>Colubroidea</taxon>
        <taxon>Viperidae</taxon>
        <taxon>Crotalinae</taxon>
        <taxon>Ophryacus</taxon>
    </lineage>
</organism>
<keyword id="KW-0106">Calcium</keyword>
<keyword id="KW-0903">Direct protein sequencing</keyword>
<keyword id="KW-1015">Disulfide bond</keyword>
<keyword id="KW-0378">Hydrolase</keyword>
<keyword id="KW-0442">Lipid degradation</keyword>
<keyword id="KW-0443">Lipid metabolism</keyword>
<keyword id="KW-0479">Metal-binding</keyword>
<keyword id="KW-0528">Neurotoxin</keyword>
<keyword id="KW-0964">Secreted</keyword>
<keyword id="KW-0800">Toxin</keyword>
<reference key="1">
    <citation type="journal article" date="2019" name="J. Proteomics">
        <title>Venom characterization of the three species of Ophryacus and proteomic profiling of O. sphenophrys unveils Sphenotoxin, a novel Crotoxin-like heterodimeric beta-neurotoxin.</title>
        <authorList>
            <person name="Neri-Castro E."/>
            <person name="Lomonte B."/>
            <person name="Valdes M."/>
            <person name="Ponce-Lopez R."/>
            <person name="Benard-Valle M."/>
            <person name="Borja M."/>
            <person name="Strickland J.L."/>
            <person name="Jones J.M."/>
            <person name="Gruenwald C."/>
            <person name="Zamudio F."/>
            <person name="Alagon A."/>
        </authorList>
    </citation>
    <scope>PROTEIN SEQUENCE</scope>
    <scope>FUNCTION</scope>
    <scope>SUBUNIT</scope>
    <scope>SUBCELLULAR LOCATION</scope>
    <scope>MASS SPECTROMETRY</scope>
    <source>
        <strain>Mexico</strain>
        <tissue>Venom</tissue>
    </source>
</reference>
<dbReference type="EC" id="3.1.1.4" evidence="2 3"/>
<dbReference type="SMR" id="C0HLF7"/>
<dbReference type="GO" id="GO:0005576">
    <property type="term" value="C:extracellular region"/>
    <property type="evidence" value="ECO:0007669"/>
    <property type="project" value="UniProtKB-SubCell"/>
</dbReference>
<dbReference type="GO" id="GO:0005509">
    <property type="term" value="F:calcium ion binding"/>
    <property type="evidence" value="ECO:0007669"/>
    <property type="project" value="InterPro"/>
</dbReference>
<dbReference type="GO" id="GO:0047498">
    <property type="term" value="F:calcium-dependent phospholipase A2 activity"/>
    <property type="evidence" value="ECO:0007669"/>
    <property type="project" value="TreeGrafter"/>
</dbReference>
<dbReference type="GO" id="GO:0005543">
    <property type="term" value="F:phospholipid binding"/>
    <property type="evidence" value="ECO:0007669"/>
    <property type="project" value="TreeGrafter"/>
</dbReference>
<dbReference type="GO" id="GO:0090729">
    <property type="term" value="F:toxin activity"/>
    <property type="evidence" value="ECO:0007669"/>
    <property type="project" value="UniProtKB-KW"/>
</dbReference>
<dbReference type="GO" id="GO:0050482">
    <property type="term" value="P:arachidonate secretion"/>
    <property type="evidence" value="ECO:0007669"/>
    <property type="project" value="InterPro"/>
</dbReference>
<dbReference type="GO" id="GO:0016042">
    <property type="term" value="P:lipid catabolic process"/>
    <property type="evidence" value="ECO:0007669"/>
    <property type="project" value="UniProtKB-KW"/>
</dbReference>
<dbReference type="GO" id="GO:0042130">
    <property type="term" value="P:negative regulation of T cell proliferation"/>
    <property type="evidence" value="ECO:0007669"/>
    <property type="project" value="TreeGrafter"/>
</dbReference>
<dbReference type="GO" id="GO:0006644">
    <property type="term" value="P:phospholipid metabolic process"/>
    <property type="evidence" value="ECO:0007669"/>
    <property type="project" value="InterPro"/>
</dbReference>
<dbReference type="CDD" id="cd00125">
    <property type="entry name" value="PLA2c"/>
    <property type="match status" value="1"/>
</dbReference>
<dbReference type="FunFam" id="1.20.90.10:FF:000001">
    <property type="entry name" value="Basic phospholipase A2 homolog"/>
    <property type="match status" value="1"/>
</dbReference>
<dbReference type="Gene3D" id="1.20.90.10">
    <property type="entry name" value="Phospholipase A2 domain"/>
    <property type="match status" value="1"/>
</dbReference>
<dbReference type="InterPro" id="IPR001211">
    <property type="entry name" value="PLipase_A2"/>
</dbReference>
<dbReference type="InterPro" id="IPR016090">
    <property type="entry name" value="PLipase_A2_dom"/>
</dbReference>
<dbReference type="InterPro" id="IPR036444">
    <property type="entry name" value="PLipase_A2_dom_sf"/>
</dbReference>
<dbReference type="InterPro" id="IPR033113">
    <property type="entry name" value="PLipase_A2_His_AS"/>
</dbReference>
<dbReference type="PANTHER" id="PTHR11716">
    <property type="entry name" value="PHOSPHOLIPASE A2 FAMILY MEMBER"/>
    <property type="match status" value="1"/>
</dbReference>
<dbReference type="PANTHER" id="PTHR11716:SF9">
    <property type="entry name" value="PHOSPHOLIPASE A2, MEMBRANE ASSOCIATED"/>
    <property type="match status" value="1"/>
</dbReference>
<dbReference type="Pfam" id="PF00068">
    <property type="entry name" value="Phospholip_A2_1"/>
    <property type="match status" value="1"/>
</dbReference>
<dbReference type="PRINTS" id="PR00389">
    <property type="entry name" value="PHPHLIPASEA2"/>
</dbReference>
<dbReference type="SMART" id="SM00085">
    <property type="entry name" value="PA2c"/>
    <property type="match status" value="1"/>
</dbReference>
<dbReference type="SUPFAM" id="SSF48619">
    <property type="entry name" value="Phospholipase A2, PLA2"/>
    <property type="match status" value="1"/>
</dbReference>
<dbReference type="PROSITE" id="PS00118">
    <property type="entry name" value="PA2_HIS"/>
    <property type="match status" value="1"/>
</dbReference>
<feature type="chain" id="PRO_0000446056" description="Basic phospholipase A2 sphenotoxin subunit B">
    <location>
        <begin position="1"/>
        <end position="107" status="greater than"/>
    </location>
</feature>
<feature type="active site" evidence="2">
    <location>
        <position position="47"/>
    </location>
</feature>
<feature type="active site" evidence="1">
    <location>
        <position position="89"/>
    </location>
</feature>
<feature type="binding site" evidence="1">
    <location>
        <position position="27"/>
    </location>
    <ligand>
        <name>Ca(2+)</name>
        <dbReference type="ChEBI" id="CHEBI:29108"/>
    </ligand>
</feature>
<feature type="binding site" evidence="1">
    <location>
        <position position="29"/>
    </location>
    <ligand>
        <name>Ca(2+)</name>
        <dbReference type="ChEBI" id="CHEBI:29108"/>
    </ligand>
</feature>
<feature type="binding site" evidence="1">
    <location>
        <position position="31"/>
    </location>
    <ligand>
        <name>Ca(2+)</name>
        <dbReference type="ChEBI" id="CHEBI:29108"/>
    </ligand>
</feature>
<feature type="binding site" evidence="1">
    <location>
        <position position="48"/>
    </location>
    <ligand>
        <name>Ca(2+)</name>
        <dbReference type="ChEBI" id="CHEBI:29108"/>
    </ligand>
</feature>
<feature type="disulfide bond" evidence="1">
    <location>
        <begin position="28"/>
        <end position="44"/>
    </location>
</feature>
<feature type="disulfide bond" evidence="1">
    <location>
        <begin position="43"/>
        <end position="91"/>
    </location>
</feature>
<feature type="disulfide bond" evidence="1">
    <location>
        <begin position="50"/>
        <end position="88"/>
    </location>
</feature>
<feature type="disulfide bond" evidence="1">
    <location>
        <begin position="57"/>
        <end position="81"/>
    </location>
</feature>
<feature type="disulfide bond" evidence="1">
    <location>
        <begin position="75"/>
        <end position="86"/>
    </location>
</feature>
<feature type="non-consecutive residues" evidence="4">
    <location>
        <begin position="90"/>
        <end position="91"/>
    </location>
</feature>
<feature type="non-terminal residue" evidence="4">
    <location>
        <position position="107"/>
    </location>
</feature>
<sequence>HLLQFNKMIKEETGKNAIPFYAFYGCYCGWGGSGKPKDATDRCCFEHDCCYGKLTNCNTKWDIYSYSLKDGYITCGKGTWCEKEVCECDKCLRRNLRTYKYGYMFYL</sequence>
<evidence type="ECO:0000250" key="1">
    <source>
        <dbReference type="UniProtKB" id="P62022"/>
    </source>
</evidence>
<evidence type="ECO:0000255" key="2">
    <source>
        <dbReference type="PROSITE-ProRule" id="PRU10035"/>
    </source>
</evidence>
<evidence type="ECO:0000269" key="3">
    <source>
    </source>
</evidence>
<evidence type="ECO:0000303" key="4">
    <source>
    </source>
</evidence>
<evidence type="ECO:0000305" key="5"/>
<evidence type="ECO:0000305" key="6">
    <source>
    </source>
</evidence>
<protein>
    <recommendedName>
        <fullName evidence="4">Basic phospholipase A2 sphenotoxin subunit B</fullName>
        <shortName>svPLA2</shortName>
        <ecNumber evidence="2 3">3.1.1.4</ecNumber>
    </recommendedName>
    <alternativeName>
        <fullName>Phosphatidylcholine 2-acylhydrolase</fullName>
    </alternativeName>
</protein>
<comment type="function">
    <text evidence="3">Heterodimer A-B: Sphenotoxin is a potent neurotoxin that possesses phospholipase A2 (PLA2) activity. It consists of a non-covalent association of a basic PLA2 subunit B with a non-enzymatic subunit A.</text>
</comment>
<comment type="function">
    <text evidence="3">Monomer B: Not found in vivo. In vitro, potent neurotoxin that possesses phospholipase A2 (PLA2) activity and exerts a lethal action by blocking neuromuscular transmission. Induces paralysis of the hind legs and neuromuscular blockade in mouse phrenic nerve-diaphragm preparations. PLA2 catalyzes the calcium-dependent hydrolysis of the 2-acyl groups in 3-sn-phosphoglycerides.</text>
</comment>
<comment type="catalytic activity">
    <reaction evidence="2 3">
        <text>a 1,2-diacyl-sn-glycero-3-phosphocholine + H2O = a 1-acyl-sn-glycero-3-phosphocholine + a fatty acid + H(+)</text>
        <dbReference type="Rhea" id="RHEA:15801"/>
        <dbReference type="ChEBI" id="CHEBI:15377"/>
        <dbReference type="ChEBI" id="CHEBI:15378"/>
        <dbReference type="ChEBI" id="CHEBI:28868"/>
        <dbReference type="ChEBI" id="CHEBI:57643"/>
        <dbReference type="ChEBI" id="CHEBI:58168"/>
        <dbReference type="EC" id="3.1.1.4"/>
    </reaction>
</comment>
<comment type="subunit">
    <text evidence="3">Heterodimer of A and B chains; non-covalently linked. The acidic protein (B chain) has phospholipase A2 activity and the A chain weakly inhibits the B chain enzymatic activity but potentiates its lethal potency.</text>
</comment>
<comment type="subcellular location">
    <subcellularLocation>
        <location evidence="3">Secreted</location>
    </subcellularLocation>
</comment>
<comment type="tissue specificity">
    <text evidence="6">Expressed by the venom gland.</text>
</comment>
<comment type="mass spectrometry"/>
<comment type="toxic dose">
    <text evidence="3">In monomer B, LD(50) is 0.49 ug/g by intravenous injection into mice. Toxicity is higher in combination with subunit A.</text>
</comment>
<comment type="toxic dose">
    <text evidence="3">In heterodimer A-B, LD(50) is 0.16 ug/g by intravenous injection into mice.</text>
</comment>
<comment type="similarity">
    <text evidence="5">Belongs to the phospholipase A2 family. Group II subfamily. D49 sub-subfamily.</text>
</comment>
<name>PA2B_OPHSH</name>
<accession>C0HLF7</accession>
<proteinExistence type="evidence at protein level"/>